<evidence type="ECO:0000255" key="1">
    <source>
        <dbReference type="HAMAP-Rule" id="MF_01815"/>
    </source>
</evidence>
<accession>Q5PGU1</accession>
<gene>
    <name evidence="1" type="primary">fabH</name>
    <name type="ordered locus">SPA1658</name>
</gene>
<proteinExistence type="inferred from homology"/>
<protein>
    <recommendedName>
        <fullName evidence="1">Beta-ketoacyl-[acyl-carrier-protein] synthase III</fullName>
        <shortName evidence="1">Beta-ketoacyl-ACP synthase III</shortName>
        <shortName evidence="1">KAS III</shortName>
        <ecNumber evidence="1">2.3.1.180</ecNumber>
    </recommendedName>
    <alternativeName>
        <fullName evidence="1">3-oxoacyl-[acyl-carrier-protein] synthase 3</fullName>
    </alternativeName>
    <alternativeName>
        <fullName evidence="1">3-oxoacyl-[acyl-carrier-protein] synthase III</fullName>
    </alternativeName>
</protein>
<comment type="function">
    <text evidence="1">Catalyzes the condensation reaction of fatty acid synthesis by the addition to an acyl acceptor of two carbons from malonyl-ACP. Catalyzes the first condensation reaction which initiates fatty acid synthesis and may therefore play a role in governing the total rate of fatty acid production. Possesses both acetoacetyl-ACP synthase and acetyl transacylase activities. Its substrate specificity determines the biosynthesis of branched-chain and/or straight-chain of fatty acids.</text>
</comment>
<comment type="catalytic activity">
    <reaction evidence="1">
        <text>malonyl-[ACP] + acetyl-CoA + H(+) = 3-oxobutanoyl-[ACP] + CO2 + CoA</text>
        <dbReference type="Rhea" id="RHEA:12080"/>
        <dbReference type="Rhea" id="RHEA-COMP:9623"/>
        <dbReference type="Rhea" id="RHEA-COMP:9625"/>
        <dbReference type="ChEBI" id="CHEBI:15378"/>
        <dbReference type="ChEBI" id="CHEBI:16526"/>
        <dbReference type="ChEBI" id="CHEBI:57287"/>
        <dbReference type="ChEBI" id="CHEBI:57288"/>
        <dbReference type="ChEBI" id="CHEBI:78449"/>
        <dbReference type="ChEBI" id="CHEBI:78450"/>
        <dbReference type="EC" id="2.3.1.180"/>
    </reaction>
</comment>
<comment type="pathway">
    <text evidence="1">Lipid metabolism; fatty acid biosynthesis.</text>
</comment>
<comment type="subunit">
    <text evidence="1">Homodimer.</text>
</comment>
<comment type="subcellular location">
    <subcellularLocation>
        <location evidence="1">Cytoplasm</location>
    </subcellularLocation>
</comment>
<comment type="domain">
    <text evidence="1">The last Arg residue of the ACP-binding site is essential for the weak association between ACP/AcpP and FabH.</text>
</comment>
<comment type="similarity">
    <text evidence="1">Belongs to the thiolase-like superfamily. FabH family.</text>
</comment>
<organism>
    <name type="scientific">Salmonella paratyphi A (strain ATCC 9150 / SARB42)</name>
    <dbReference type="NCBI Taxonomy" id="295319"/>
    <lineage>
        <taxon>Bacteria</taxon>
        <taxon>Pseudomonadati</taxon>
        <taxon>Pseudomonadota</taxon>
        <taxon>Gammaproteobacteria</taxon>
        <taxon>Enterobacterales</taxon>
        <taxon>Enterobacteriaceae</taxon>
        <taxon>Salmonella</taxon>
    </lineage>
</organism>
<dbReference type="EC" id="2.3.1.180" evidence="1"/>
<dbReference type="EMBL" id="CP000026">
    <property type="protein sequence ID" value="AAV77584.1"/>
    <property type="molecule type" value="Genomic_DNA"/>
</dbReference>
<dbReference type="RefSeq" id="WP_000288147.1">
    <property type="nucleotide sequence ID" value="NC_006511.1"/>
</dbReference>
<dbReference type="SMR" id="Q5PGU1"/>
<dbReference type="KEGG" id="spt:SPA1658"/>
<dbReference type="HOGENOM" id="CLU_039592_3_1_6"/>
<dbReference type="UniPathway" id="UPA00094"/>
<dbReference type="Proteomes" id="UP000008185">
    <property type="component" value="Chromosome"/>
</dbReference>
<dbReference type="GO" id="GO:0005737">
    <property type="term" value="C:cytoplasm"/>
    <property type="evidence" value="ECO:0007669"/>
    <property type="project" value="UniProtKB-SubCell"/>
</dbReference>
<dbReference type="GO" id="GO:0004315">
    <property type="term" value="F:3-oxoacyl-[acyl-carrier-protein] synthase activity"/>
    <property type="evidence" value="ECO:0007669"/>
    <property type="project" value="InterPro"/>
</dbReference>
<dbReference type="GO" id="GO:0033818">
    <property type="term" value="F:beta-ketoacyl-acyl-carrier-protein synthase III activity"/>
    <property type="evidence" value="ECO:0007669"/>
    <property type="project" value="UniProtKB-UniRule"/>
</dbReference>
<dbReference type="GO" id="GO:0006633">
    <property type="term" value="P:fatty acid biosynthetic process"/>
    <property type="evidence" value="ECO:0007669"/>
    <property type="project" value="UniProtKB-UniRule"/>
</dbReference>
<dbReference type="CDD" id="cd00830">
    <property type="entry name" value="KAS_III"/>
    <property type="match status" value="1"/>
</dbReference>
<dbReference type="FunFam" id="3.40.47.10:FF:000004">
    <property type="entry name" value="3-oxoacyl-[acyl-carrier-protein] synthase 3"/>
    <property type="match status" value="1"/>
</dbReference>
<dbReference type="Gene3D" id="3.40.47.10">
    <property type="match status" value="1"/>
</dbReference>
<dbReference type="HAMAP" id="MF_01815">
    <property type="entry name" value="FabH"/>
    <property type="match status" value="1"/>
</dbReference>
<dbReference type="InterPro" id="IPR013747">
    <property type="entry name" value="ACP_syn_III_C"/>
</dbReference>
<dbReference type="InterPro" id="IPR013751">
    <property type="entry name" value="ACP_syn_III_N"/>
</dbReference>
<dbReference type="InterPro" id="IPR004655">
    <property type="entry name" value="FabH"/>
</dbReference>
<dbReference type="InterPro" id="IPR016039">
    <property type="entry name" value="Thiolase-like"/>
</dbReference>
<dbReference type="NCBIfam" id="TIGR00747">
    <property type="entry name" value="fabH"/>
    <property type="match status" value="1"/>
</dbReference>
<dbReference type="NCBIfam" id="NF006829">
    <property type="entry name" value="PRK09352.1"/>
    <property type="match status" value="1"/>
</dbReference>
<dbReference type="PANTHER" id="PTHR43091">
    <property type="entry name" value="3-OXOACYL-[ACYL-CARRIER-PROTEIN] SYNTHASE"/>
    <property type="match status" value="1"/>
</dbReference>
<dbReference type="PANTHER" id="PTHR43091:SF1">
    <property type="entry name" value="BETA-KETOACYL-[ACYL-CARRIER-PROTEIN] SYNTHASE III, CHLOROPLASTIC"/>
    <property type="match status" value="1"/>
</dbReference>
<dbReference type="Pfam" id="PF08545">
    <property type="entry name" value="ACP_syn_III"/>
    <property type="match status" value="1"/>
</dbReference>
<dbReference type="Pfam" id="PF08541">
    <property type="entry name" value="ACP_syn_III_C"/>
    <property type="match status" value="1"/>
</dbReference>
<dbReference type="SUPFAM" id="SSF53901">
    <property type="entry name" value="Thiolase-like"/>
    <property type="match status" value="1"/>
</dbReference>
<keyword id="KW-0012">Acyltransferase</keyword>
<keyword id="KW-0963">Cytoplasm</keyword>
<keyword id="KW-0275">Fatty acid biosynthesis</keyword>
<keyword id="KW-0276">Fatty acid metabolism</keyword>
<keyword id="KW-0444">Lipid biosynthesis</keyword>
<keyword id="KW-0443">Lipid metabolism</keyword>
<keyword id="KW-0511">Multifunctional enzyme</keyword>
<keyword id="KW-0808">Transferase</keyword>
<name>FABH_SALPA</name>
<sequence length="317" mass="33525">MYTKIIGTGSYLPEQVRTNADLEKMVETSDEWIVTRTGIRERHIAAPDETVATMGFTAANRAIEMAGIDKDQIGLIVVATTSATHAFPSAACQIQSMLGIKGCPAFDVAAACAGFTYALSIADQYVKSGAVKHALVVGSDVLARTCDPGDRGTIIIFGDGAGAAVLSASEEPGIISTHLHADGRYGELLTLPNADRVNPDNPIYLTMAGNEVFKVAVTELAHIVDETLAANNLDRSELDWLVPHQANLRIISATAKKLGMSMDNVVVTLDRHGNTSAASVPCALDEAVRDGRIKAGQLVLLEAFGGGFTWGSALIRF</sequence>
<reference key="1">
    <citation type="journal article" date="2004" name="Nat. Genet.">
        <title>Comparison of genome degradation in Paratyphi A and Typhi, human-restricted serovars of Salmonella enterica that cause typhoid.</title>
        <authorList>
            <person name="McClelland M."/>
            <person name="Sanderson K.E."/>
            <person name="Clifton S.W."/>
            <person name="Latreille P."/>
            <person name="Porwollik S."/>
            <person name="Sabo A."/>
            <person name="Meyer R."/>
            <person name="Bieri T."/>
            <person name="Ozersky P."/>
            <person name="McLellan M."/>
            <person name="Harkins C.R."/>
            <person name="Wang C."/>
            <person name="Nguyen C."/>
            <person name="Berghoff A."/>
            <person name="Elliott G."/>
            <person name="Kohlberg S."/>
            <person name="Strong C."/>
            <person name="Du F."/>
            <person name="Carter J."/>
            <person name="Kremizki C."/>
            <person name="Layman D."/>
            <person name="Leonard S."/>
            <person name="Sun H."/>
            <person name="Fulton L."/>
            <person name="Nash W."/>
            <person name="Miner T."/>
            <person name="Minx P."/>
            <person name="Delehaunty K."/>
            <person name="Fronick C."/>
            <person name="Magrini V."/>
            <person name="Nhan M."/>
            <person name="Warren W."/>
            <person name="Florea L."/>
            <person name="Spieth J."/>
            <person name="Wilson R.K."/>
        </authorList>
    </citation>
    <scope>NUCLEOTIDE SEQUENCE [LARGE SCALE GENOMIC DNA]</scope>
    <source>
        <strain>ATCC 9150 / SARB42</strain>
    </source>
</reference>
<feature type="chain" id="PRO_1000056405" description="Beta-ketoacyl-[acyl-carrier-protein] synthase III">
    <location>
        <begin position="1"/>
        <end position="317"/>
    </location>
</feature>
<feature type="region of interest" description="ACP-binding" evidence="1">
    <location>
        <begin position="245"/>
        <end position="249"/>
    </location>
</feature>
<feature type="active site" evidence="1">
    <location>
        <position position="112"/>
    </location>
</feature>
<feature type="active site" evidence="1">
    <location>
        <position position="244"/>
    </location>
</feature>
<feature type="active site" evidence="1">
    <location>
        <position position="274"/>
    </location>
</feature>